<name>PDXB_SHIFL</name>
<proteinExistence type="inferred from homology"/>
<reference key="1">
    <citation type="journal article" date="2002" name="Nucleic Acids Res.">
        <title>Genome sequence of Shigella flexneri 2a: insights into pathogenicity through comparison with genomes of Escherichia coli K12 and O157.</title>
        <authorList>
            <person name="Jin Q."/>
            <person name="Yuan Z."/>
            <person name="Xu J."/>
            <person name="Wang Y."/>
            <person name="Shen Y."/>
            <person name="Lu W."/>
            <person name="Wang J."/>
            <person name="Liu H."/>
            <person name="Yang J."/>
            <person name="Yang F."/>
            <person name="Zhang X."/>
            <person name="Zhang J."/>
            <person name="Yang G."/>
            <person name="Wu H."/>
            <person name="Qu D."/>
            <person name="Dong J."/>
            <person name="Sun L."/>
            <person name="Xue Y."/>
            <person name="Zhao A."/>
            <person name="Gao Y."/>
            <person name="Zhu J."/>
            <person name="Kan B."/>
            <person name="Ding K."/>
            <person name="Chen S."/>
            <person name="Cheng H."/>
            <person name="Yao Z."/>
            <person name="He B."/>
            <person name="Chen R."/>
            <person name="Ma D."/>
            <person name="Qiang B."/>
            <person name="Wen Y."/>
            <person name="Hou Y."/>
            <person name="Yu J."/>
        </authorList>
    </citation>
    <scope>NUCLEOTIDE SEQUENCE [LARGE SCALE GENOMIC DNA]</scope>
    <source>
        <strain>301 / Serotype 2a</strain>
    </source>
</reference>
<reference key="2">
    <citation type="journal article" date="2003" name="Infect. Immun.">
        <title>Complete genome sequence and comparative genomics of Shigella flexneri serotype 2a strain 2457T.</title>
        <authorList>
            <person name="Wei J."/>
            <person name="Goldberg M.B."/>
            <person name="Burland V."/>
            <person name="Venkatesan M.M."/>
            <person name="Deng W."/>
            <person name="Fournier G."/>
            <person name="Mayhew G.F."/>
            <person name="Plunkett G. III"/>
            <person name="Rose D.J."/>
            <person name="Darling A."/>
            <person name="Mau B."/>
            <person name="Perna N.T."/>
            <person name="Payne S.M."/>
            <person name="Runyen-Janecky L.J."/>
            <person name="Zhou S."/>
            <person name="Schwartz D.C."/>
            <person name="Blattner F.R."/>
        </authorList>
    </citation>
    <scope>NUCLEOTIDE SEQUENCE [LARGE SCALE GENOMIC DNA]</scope>
    <source>
        <strain>ATCC 700930 / 2457T / Serotype 2a</strain>
    </source>
</reference>
<organism>
    <name type="scientific">Shigella flexneri</name>
    <dbReference type="NCBI Taxonomy" id="623"/>
    <lineage>
        <taxon>Bacteria</taxon>
        <taxon>Pseudomonadati</taxon>
        <taxon>Pseudomonadota</taxon>
        <taxon>Gammaproteobacteria</taxon>
        <taxon>Enterobacterales</taxon>
        <taxon>Enterobacteriaceae</taxon>
        <taxon>Shigella</taxon>
    </lineage>
</organism>
<sequence>MKILVDENMPYARDLFSRLGEVIAVPGRPIPVAQLADADALMVRSVTKVNESLLAGKPIKFVGTATAGTDHVDEAWLKQAGIGFSAAPGCNAIAVVEYVFSSLLMLAERDGFSLHDRTVGIVGVGNVGRRLQARLEALGIKTLLCDPPRADRGDEGDFRSLDELVQRADILTFHTPLFKDGPYKTLHLADEKLIRSLKPGAILINACRGAVVDNTALLTCLNEGQKLSVVLDVWEGEPELNVELLTKVDIGTPHIAGYTLEGKARGTTQVFEAYSKFIGHEQHVALDTLLPAPEFGRITLHGPLDQPTLKRLVHLVYDVRRDDAPLRKVAGIPGEFDKLRKNYLERREWSSLYVICDDASAASLLCKLGFNAVHHPAR</sequence>
<protein>
    <recommendedName>
        <fullName evidence="1">Erythronate-4-phosphate dehydrogenase</fullName>
        <ecNumber evidence="1">1.1.1.290</ecNumber>
    </recommendedName>
</protein>
<evidence type="ECO:0000255" key="1">
    <source>
        <dbReference type="HAMAP-Rule" id="MF_01825"/>
    </source>
</evidence>
<keyword id="KW-0963">Cytoplasm</keyword>
<keyword id="KW-0520">NAD</keyword>
<keyword id="KW-0560">Oxidoreductase</keyword>
<keyword id="KW-0664">Pyridoxine biosynthesis</keyword>
<keyword id="KW-1185">Reference proteome</keyword>
<gene>
    <name evidence="1" type="primary">pdxB</name>
    <name type="ordered locus">SF2396</name>
    <name type="ordered locus">S2531</name>
</gene>
<dbReference type="EC" id="1.1.1.290" evidence="1"/>
<dbReference type="EMBL" id="AE005674">
    <property type="protein sequence ID" value="AAN43909.1"/>
    <property type="molecule type" value="Genomic_DNA"/>
</dbReference>
<dbReference type="EMBL" id="AE014073">
    <property type="protein sequence ID" value="AAP17727.1"/>
    <property type="molecule type" value="Genomic_DNA"/>
</dbReference>
<dbReference type="RefSeq" id="NP_708202.1">
    <property type="nucleotide sequence ID" value="NC_004337.2"/>
</dbReference>
<dbReference type="RefSeq" id="WP_000699105.1">
    <property type="nucleotide sequence ID" value="NZ_WPGW01000016.1"/>
</dbReference>
<dbReference type="SMR" id="Q83QR1"/>
<dbReference type="STRING" id="198214.SF2396"/>
<dbReference type="PaxDb" id="198214-SF2396"/>
<dbReference type="GeneID" id="1026764"/>
<dbReference type="KEGG" id="sfl:SF2396"/>
<dbReference type="KEGG" id="sfx:S2531"/>
<dbReference type="PATRIC" id="fig|198214.7.peg.2863"/>
<dbReference type="HOGENOM" id="CLU_019796_4_0_6"/>
<dbReference type="UniPathway" id="UPA00244">
    <property type="reaction ID" value="UER00310"/>
</dbReference>
<dbReference type="Proteomes" id="UP000001006">
    <property type="component" value="Chromosome"/>
</dbReference>
<dbReference type="Proteomes" id="UP000002673">
    <property type="component" value="Chromosome"/>
</dbReference>
<dbReference type="GO" id="GO:0005829">
    <property type="term" value="C:cytosol"/>
    <property type="evidence" value="ECO:0007669"/>
    <property type="project" value="TreeGrafter"/>
</dbReference>
<dbReference type="GO" id="GO:0033711">
    <property type="term" value="F:4-phosphoerythronate dehydrogenase activity"/>
    <property type="evidence" value="ECO:0007669"/>
    <property type="project" value="UniProtKB-EC"/>
</dbReference>
<dbReference type="GO" id="GO:0051287">
    <property type="term" value="F:NAD binding"/>
    <property type="evidence" value="ECO:0007669"/>
    <property type="project" value="InterPro"/>
</dbReference>
<dbReference type="GO" id="GO:0046983">
    <property type="term" value="F:protein dimerization activity"/>
    <property type="evidence" value="ECO:0007669"/>
    <property type="project" value="InterPro"/>
</dbReference>
<dbReference type="GO" id="GO:0036001">
    <property type="term" value="P:'de novo' pyridoxal 5'-phosphate biosynthetic process"/>
    <property type="evidence" value="ECO:0007669"/>
    <property type="project" value="TreeGrafter"/>
</dbReference>
<dbReference type="GO" id="GO:0008615">
    <property type="term" value="P:pyridoxine biosynthetic process"/>
    <property type="evidence" value="ECO:0007669"/>
    <property type="project" value="UniProtKB-UniRule"/>
</dbReference>
<dbReference type="CDD" id="cd12158">
    <property type="entry name" value="ErythrP_dh"/>
    <property type="match status" value="1"/>
</dbReference>
<dbReference type="FunFam" id="3.30.1370.170:FF:000001">
    <property type="entry name" value="Erythronate-4-phosphate dehydrogenase"/>
    <property type="match status" value="1"/>
</dbReference>
<dbReference type="FunFam" id="3.40.50.720:FF:000093">
    <property type="entry name" value="Erythronate-4-phosphate dehydrogenase"/>
    <property type="match status" value="1"/>
</dbReference>
<dbReference type="Gene3D" id="3.30.1370.170">
    <property type="match status" value="1"/>
</dbReference>
<dbReference type="Gene3D" id="3.40.50.720">
    <property type="entry name" value="NAD(P)-binding Rossmann-like Domain"/>
    <property type="match status" value="2"/>
</dbReference>
<dbReference type="HAMAP" id="MF_01825">
    <property type="entry name" value="PdxB"/>
    <property type="match status" value="1"/>
</dbReference>
<dbReference type="InterPro" id="IPR006139">
    <property type="entry name" value="D-isomer_2_OHA_DH_cat_dom"/>
</dbReference>
<dbReference type="InterPro" id="IPR029753">
    <property type="entry name" value="D-isomer_DH_CS"/>
</dbReference>
<dbReference type="InterPro" id="IPR029752">
    <property type="entry name" value="D-isomer_DH_CS1"/>
</dbReference>
<dbReference type="InterPro" id="IPR006140">
    <property type="entry name" value="D-isomer_DH_NAD-bd"/>
</dbReference>
<dbReference type="InterPro" id="IPR020921">
    <property type="entry name" value="Erythronate-4-P_DHase"/>
</dbReference>
<dbReference type="InterPro" id="IPR024531">
    <property type="entry name" value="Erythronate-4-P_DHase_dimer"/>
</dbReference>
<dbReference type="InterPro" id="IPR036291">
    <property type="entry name" value="NAD(P)-bd_dom_sf"/>
</dbReference>
<dbReference type="InterPro" id="IPR038251">
    <property type="entry name" value="PdxB_dimer_sf"/>
</dbReference>
<dbReference type="NCBIfam" id="NF001309">
    <property type="entry name" value="PRK00257.1"/>
    <property type="match status" value="1"/>
</dbReference>
<dbReference type="NCBIfam" id="NF011966">
    <property type="entry name" value="PRK15438.1"/>
    <property type="match status" value="1"/>
</dbReference>
<dbReference type="PANTHER" id="PTHR42938">
    <property type="entry name" value="FORMATE DEHYDROGENASE 1"/>
    <property type="match status" value="1"/>
</dbReference>
<dbReference type="PANTHER" id="PTHR42938:SF9">
    <property type="entry name" value="FORMATE DEHYDROGENASE 1"/>
    <property type="match status" value="1"/>
</dbReference>
<dbReference type="Pfam" id="PF00389">
    <property type="entry name" value="2-Hacid_dh"/>
    <property type="match status" value="1"/>
</dbReference>
<dbReference type="Pfam" id="PF02826">
    <property type="entry name" value="2-Hacid_dh_C"/>
    <property type="match status" value="1"/>
</dbReference>
<dbReference type="Pfam" id="PF11890">
    <property type="entry name" value="DUF3410"/>
    <property type="match status" value="1"/>
</dbReference>
<dbReference type="SUPFAM" id="SSF52283">
    <property type="entry name" value="Formate/glycerate dehydrogenase catalytic domain-like"/>
    <property type="match status" value="1"/>
</dbReference>
<dbReference type="SUPFAM" id="SSF51735">
    <property type="entry name" value="NAD(P)-binding Rossmann-fold domains"/>
    <property type="match status" value="1"/>
</dbReference>
<dbReference type="PROSITE" id="PS00065">
    <property type="entry name" value="D_2_HYDROXYACID_DH_1"/>
    <property type="match status" value="1"/>
</dbReference>
<dbReference type="PROSITE" id="PS00671">
    <property type="entry name" value="D_2_HYDROXYACID_DH_3"/>
    <property type="match status" value="1"/>
</dbReference>
<comment type="function">
    <text evidence="1">Catalyzes the oxidation of erythronate-4-phosphate to 3-hydroxy-2-oxo-4-phosphonooxybutanoate.</text>
</comment>
<comment type="catalytic activity">
    <reaction evidence="1">
        <text>4-phospho-D-erythronate + NAD(+) = (R)-3-hydroxy-2-oxo-4-phosphooxybutanoate + NADH + H(+)</text>
        <dbReference type="Rhea" id="RHEA:18829"/>
        <dbReference type="ChEBI" id="CHEBI:15378"/>
        <dbReference type="ChEBI" id="CHEBI:57540"/>
        <dbReference type="ChEBI" id="CHEBI:57945"/>
        <dbReference type="ChEBI" id="CHEBI:58538"/>
        <dbReference type="ChEBI" id="CHEBI:58766"/>
        <dbReference type="EC" id="1.1.1.290"/>
    </reaction>
</comment>
<comment type="pathway">
    <text evidence="1">Cofactor biosynthesis; pyridoxine 5'-phosphate biosynthesis; pyridoxine 5'-phosphate from D-erythrose 4-phosphate: step 2/5.</text>
</comment>
<comment type="subunit">
    <text evidence="1">Homodimer.</text>
</comment>
<comment type="subcellular location">
    <subcellularLocation>
        <location evidence="1">Cytoplasm</location>
    </subcellularLocation>
</comment>
<comment type="similarity">
    <text evidence="1">Belongs to the D-isomer specific 2-hydroxyacid dehydrogenase family. PdxB subfamily.</text>
</comment>
<accession>Q83QR1</accession>
<feature type="chain" id="PRO_0000075990" description="Erythronate-4-phosphate dehydrogenase">
    <location>
        <begin position="1"/>
        <end position="378"/>
    </location>
</feature>
<feature type="active site" evidence="1">
    <location>
        <position position="208"/>
    </location>
</feature>
<feature type="active site" evidence="1">
    <location>
        <position position="237"/>
    </location>
</feature>
<feature type="active site" description="Proton donor" evidence="1">
    <location>
        <position position="254"/>
    </location>
</feature>
<feature type="binding site" evidence="1">
    <location>
        <position position="45"/>
    </location>
    <ligand>
        <name>substrate</name>
    </ligand>
</feature>
<feature type="binding site" evidence="1">
    <location>
        <position position="66"/>
    </location>
    <ligand>
        <name>substrate</name>
    </ligand>
</feature>
<feature type="binding site" evidence="1">
    <location>
        <position position="146"/>
    </location>
    <ligand>
        <name>NAD(+)</name>
        <dbReference type="ChEBI" id="CHEBI:57540"/>
    </ligand>
</feature>
<feature type="binding site" evidence="1">
    <location>
        <position position="175"/>
    </location>
    <ligand>
        <name>NAD(+)</name>
        <dbReference type="ChEBI" id="CHEBI:57540"/>
    </ligand>
</feature>
<feature type="binding site" evidence="1">
    <location>
        <position position="232"/>
    </location>
    <ligand>
        <name>NAD(+)</name>
        <dbReference type="ChEBI" id="CHEBI:57540"/>
    </ligand>
</feature>
<feature type="binding site" evidence="1">
    <location>
        <position position="257"/>
    </location>
    <ligand>
        <name>NAD(+)</name>
        <dbReference type="ChEBI" id="CHEBI:57540"/>
    </ligand>
</feature>
<feature type="binding site" evidence="1">
    <location>
        <position position="258"/>
    </location>
    <ligand>
        <name>substrate</name>
    </ligand>
</feature>